<proteinExistence type="evidence at transcript level"/>
<name>NEU4_CATCO</name>
<evidence type="ECO:0000250" key="1"/>
<evidence type="ECO:0000250" key="2">
    <source>
        <dbReference type="UniProtKB" id="P01175"/>
    </source>
</evidence>
<evidence type="ECO:0000256" key="3">
    <source>
        <dbReference type="SAM" id="MobiDB-lite"/>
    </source>
</evidence>
<evidence type="ECO:0000305" key="4"/>
<accession>P16229</accession>
<organism>
    <name type="scientific">Catostomus commersonii</name>
    <name type="common">White sucker</name>
    <name type="synonym">Cyprinus commersonnii</name>
    <dbReference type="NCBI Taxonomy" id="7971"/>
    <lineage>
        <taxon>Eukaryota</taxon>
        <taxon>Metazoa</taxon>
        <taxon>Chordata</taxon>
        <taxon>Craniata</taxon>
        <taxon>Vertebrata</taxon>
        <taxon>Euteleostomi</taxon>
        <taxon>Actinopterygii</taxon>
        <taxon>Neopterygii</taxon>
        <taxon>Teleostei</taxon>
        <taxon>Ostariophysi</taxon>
        <taxon>Cypriniformes</taxon>
        <taxon>Catostomoidei</taxon>
        <taxon>Catostomidae</taxon>
        <taxon>Catostomus</taxon>
    </lineage>
</organism>
<feature type="signal peptide">
    <location>
        <begin position="1"/>
        <end position="20"/>
    </location>
</feature>
<feature type="peptide" id="PRO_0000020550" description="Vasotocin">
    <location>
        <begin position="21"/>
        <end position="29"/>
    </location>
</feature>
<feature type="chain" id="PRO_0000020551" description="Neurophysin VT 2">
    <location>
        <begin position="33"/>
        <end position="155"/>
    </location>
</feature>
<feature type="region of interest" description="Disordered" evidence="3">
    <location>
        <begin position="119"/>
        <end position="139"/>
    </location>
</feature>
<feature type="compositionally biased region" description="Acidic residues" evidence="3">
    <location>
        <begin position="119"/>
        <end position="128"/>
    </location>
</feature>
<feature type="modified residue" description="Glycine amide" evidence="1">
    <location>
        <position position="29"/>
    </location>
</feature>
<feature type="disulfide bond" evidence="2">
    <location>
        <begin position="21"/>
        <end position="26"/>
    </location>
</feature>
<feature type="disulfide bond" evidence="2">
    <location>
        <begin position="42"/>
        <end position="86"/>
    </location>
</feature>
<feature type="disulfide bond" evidence="2">
    <location>
        <begin position="45"/>
        <end position="59"/>
    </location>
</feature>
<feature type="disulfide bond" evidence="2">
    <location>
        <begin position="53"/>
        <end position="76"/>
    </location>
</feature>
<feature type="disulfide bond" evidence="2">
    <location>
        <begin position="60"/>
        <end position="66"/>
    </location>
</feature>
<feature type="disulfide bond" evidence="2">
    <location>
        <begin position="93"/>
        <end position="106"/>
    </location>
</feature>
<feature type="disulfide bond" evidence="2">
    <location>
        <begin position="100"/>
        <end position="118"/>
    </location>
</feature>
<feature type="disulfide bond" evidence="2">
    <location>
        <begin position="107"/>
        <end position="112"/>
    </location>
</feature>
<comment type="function">
    <text>Vasotocin is an antidiuretic hormone.</text>
</comment>
<comment type="subcellular location">
    <subcellularLocation>
        <location>Secreted</location>
    </subcellularLocation>
</comment>
<comment type="similarity">
    <text evidence="4">Belongs to the vasopressin/oxytocin family.</text>
</comment>
<reference key="1">
    <citation type="journal article" date="1990" name="Biochemistry">
        <title>Vasotocin genes of the teleost fish Catostomus commersoni: gene structure, exon-intron boundary, and hormone precursor organization.</title>
        <authorList>
            <person name="Morley S.D."/>
            <person name="Schoenrock C."/>
            <person name="Heierhorst J."/>
            <person name="Figueroa J."/>
            <person name="Lederis K."/>
            <person name="Richter D."/>
        </authorList>
    </citation>
    <scope>NUCLEOTIDE SEQUENCE [MRNA]</scope>
</reference>
<keyword id="KW-0027">Amidation</keyword>
<keyword id="KW-0165">Cleavage on pair of basic residues</keyword>
<keyword id="KW-1015">Disulfide bond</keyword>
<keyword id="KW-0372">Hormone</keyword>
<keyword id="KW-0964">Secreted</keyword>
<keyword id="KW-0732">Signal</keyword>
<sequence length="155" mass="16191">MSVCAVLLLCVAGLLCLSSACYIQNCPRGGKRALLEPVSRQCLACGPGDKGRCLGPSICCGEEIGCLVGSPWMARCQEEEYLPSPCQTAGKLCGSDAGPCAAPGVCCGTEGCKLDPNCSEDSESEEPADQNTLGASPGELLLRLLHPNNRKHNQY</sequence>
<protein>
    <recommendedName>
        <fullName>Vasotocin-neurophysin VT 2</fullName>
    </recommendedName>
    <component>
        <recommendedName>
            <fullName>Vasotocin</fullName>
            <shortName>VT</shortName>
        </recommendedName>
    </component>
    <component>
        <recommendedName>
            <fullName>Neurophysin VT 2</fullName>
        </recommendedName>
    </component>
</protein>
<dbReference type="EMBL" id="J02889">
    <property type="protein sequence ID" value="AAA49199.1"/>
    <property type="molecule type" value="mRNA"/>
</dbReference>
<dbReference type="PIR" id="B32669">
    <property type="entry name" value="B32669"/>
</dbReference>
<dbReference type="SMR" id="P16229"/>
<dbReference type="GO" id="GO:0005615">
    <property type="term" value="C:extracellular space"/>
    <property type="evidence" value="ECO:0007669"/>
    <property type="project" value="TreeGrafter"/>
</dbReference>
<dbReference type="GO" id="GO:0030141">
    <property type="term" value="C:secretory granule"/>
    <property type="evidence" value="ECO:0007669"/>
    <property type="project" value="TreeGrafter"/>
</dbReference>
<dbReference type="GO" id="GO:0005185">
    <property type="term" value="F:neurohypophyseal hormone activity"/>
    <property type="evidence" value="ECO:0007669"/>
    <property type="project" value="InterPro"/>
</dbReference>
<dbReference type="FunFam" id="2.60.9.10:FF:000001">
    <property type="entry name" value="oxytocin-neurophysin 1"/>
    <property type="match status" value="1"/>
</dbReference>
<dbReference type="Gene3D" id="2.60.9.10">
    <property type="entry name" value="Neurohypophysial hormone domain"/>
    <property type="match status" value="1"/>
</dbReference>
<dbReference type="InterPro" id="IPR000981">
    <property type="entry name" value="Neurhyp_horm"/>
</dbReference>
<dbReference type="InterPro" id="IPR036387">
    <property type="entry name" value="Neurhyp_horm_dom_sf"/>
</dbReference>
<dbReference type="InterPro" id="IPR022423">
    <property type="entry name" value="Neurohypophysial_hormone_CS"/>
</dbReference>
<dbReference type="PANTHER" id="PTHR11681:SF5">
    <property type="entry name" value="ISOTOCIN"/>
    <property type="match status" value="1"/>
</dbReference>
<dbReference type="PANTHER" id="PTHR11681">
    <property type="entry name" value="NEUROPHYSIN"/>
    <property type="match status" value="1"/>
</dbReference>
<dbReference type="Pfam" id="PF00220">
    <property type="entry name" value="Hormone_4"/>
    <property type="match status" value="1"/>
</dbReference>
<dbReference type="Pfam" id="PF00184">
    <property type="entry name" value="Hormone_5"/>
    <property type="match status" value="1"/>
</dbReference>
<dbReference type="PIRSF" id="PIRSF001815">
    <property type="entry name" value="Nonapeptide_hormone_precursor"/>
    <property type="match status" value="1"/>
</dbReference>
<dbReference type="PRINTS" id="PR00831">
    <property type="entry name" value="NEUROPHYSIN"/>
</dbReference>
<dbReference type="SMART" id="SM00003">
    <property type="entry name" value="NH"/>
    <property type="match status" value="1"/>
</dbReference>
<dbReference type="SUPFAM" id="SSF49606">
    <property type="entry name" value="Neurophysin II"/>
    <property type="match status" value="1"/>
</dbReference>
<dbReference type="PROSITE" id="PS00264">
    <property type="entry name" value="NEUROHYPOPHYS_HORM"/>
    <property type="match status" value="1"/>
</dbReference>